<gene>
    <name evidence="1" type="primary">vpr</name>
</gene>
<evidence type="ECO:0000255" key="1">
    <source>
        <dbReference type="HAMAP-Rule" id="MF_04080"/>
    </source>
</evidence>
<name>VPR_HV1Y2</name>
<reference key="1">
    <citation type="journal article" date="1992" name="J. Virol.">
        <title>Complete nucleotide sequence, genome organization, and biological properties of human immunodeficiency virus type 1 in vivo: evidence for limited defectiveness and complementation.</title>
        <authorList>
            <person name="Li Y."/>
            <person name="Hui H."/>
            <person name="Burgess C.J."/>
            <person name="Price R.W."/>
            <person name="Sharp P.M."/>
            <person name="Hahn B.H."/>
            <person name="Shaw G.M."/>
        </authorList>
    </citation>
    <scope>NUCLEOTIDE SEQUENCE [GENOMIC RNA]</scope>
</reference>
<reference key="2">
    <citation type="journal article" date="1998" name="J. Virol.">
        <title>Interaction of the human immunodeficiency virus type 1 Vpr protein with the nuclear pore complex.</title>
        <authorList>
            <person name="Fouchier R.A."/>
            <person name="Meyer B.E."/>
            <person name="Simon J.H."/>
            <person name="Fischer U."/>
            <person name="Albright A.V."/>
            <person name="Gonzalez-Scarano F."/>
            <person name="Malim M.H."/>
        </authorList>
    </citation>
    <scope>INTERACTION WITH HUMAN NUCLEOPORINS</scope>
</reference>
<accession>P35967</accession>
<sequence length="97" mass="11475">MEQAPEDQGPQREPHNEWTLELLEELKREAVRHFPRPWLHGLGQHIYETYGDTWAGVEAIIRILQQLLFIHFRIGCQHSRIGIIQQRRARRNGASRS</sequence>
<dbReference type="EMBL" id="M93258">
    <property type="status" value="NOT_ANNOTATED_CDS"/>
    <property type="molecule type" value="Genomic_RNA"/>
</dbReference>
<dbReference type="PIR" id="D44001">
    <property type="entry name" value="D44001"/>
</dbReference>
<dbReference type="SMR" id="P35967"/>
<dbReference type="Proteomes" id="UP000007419">
    <property type="component" value="Genome"/>
</dbReference>
<dbReference type="GO" id="GO:0043657">
    <property type="term" value="C:host cell"/>
    <property type="evidence" value="ECO:0007669"/>
    <property type="project" value="GOC"/>
</dbReference>
<dbReference type="GO" id="GO:0042025">
    <property type="term" value="C:host cell nucleus"/>
    <property type="evidence" value="ECO:0007669"/>
    <property type="project" value="UniProtKB-SubCell"/>
</dbReference>
<dbReference type="GO" id="GO:0043655">
    <property type="term" value="C:host extracellular space"/>
    <property type="evidence" value="ECO:0007669"/>
    <property type="project" value="UniProtKB-SubCell"/>
</dbReference>
<dbReference type="GO" id="GO:0044423">
    <property type="term" value="C:virion component"/>
    <property type="evidence" value="ECO:0007669"/>
    <property type="project" value="UniProtKB-UniRule"/>
</dbReference>
<dbReference type="GO" id="GO:0006351">
    <property type="term" value="P:DNA-templated transcription"/>
    <property type="evidence" value="ECO:0007669"/>
    <property type="project" value="UniProtKB-UniRule"/>
</dbReference>
<dbReference type="GO" id="GO:0034220">
    <property type="term" value="P:monoatomic ion transmembrane transport"/>
    <property type="evidence" value="ECO:0007669"/>
    <property type="project" value="UniProtKB-KW"/>
</dbReference>
<dbReference type="GO" id="GO:0051260">
    <property type="term" value="P:protein homooligomerization"/>
    <property type="evidence" value="ECO:0007669"/>
    <property type="project" value="UniProtKB-UniRule"/>
</dbReference>
<dbReference type="GO" id="GO:0006355">
    <property type="term" value="P:regulation of DNA-templated transcription"/>
    <property type="evidence" value="ECO:0007669"/>
    <property type="project" value="UniProtKB-UniRule"/>
</dbReference>
<dbReference type="GO" id="GO:0046718">
    <property type="term" value="P:symbiont entry into host cell"/>
    <property type="evidence" value="ECO:0007669"/>
    <property type="project" value="UniProtKB-KW"/>
</dbReference>
<dbReference type="GO" id="GO:0052151">
    <property type="term" value="P:symbiont-mediated activation of host apoptosis"/>
    <property type="evidence" value="ECO:0007669"/>
    <property type="project" value="UniProtKB-UniRule"/>
</dbReference>
<dbReference type="GO" id="GO:0039592">
    <property type="term" value="P:symbiont-mediated arrest of host cell cycle during G2/M transition"/>
    <property type="evidence" value="ECO:0007669"/>
    <property type="project" value="UniProtKB-UniRule"/>
</dbReference>
<dbReference type="GO" id="GO:0075732">
    <property type="term" value="P:viral penetration into host nucleus"/>
    <property type="evidence" value="ECO:0007669"/>
    <property type="project" value="UniProtKB-UniRule"/>
</dbReference>
<dbReference type="Gene3D" id="6.10.210.10">
    <property type="match status" value="1"/>
</dbReference>
<dbReference type="Gene3D" id="1.20.5.90">
    <property type="entry name" value="VpR/VpX protein, C-terminal domain"/>
    <property type="match status" value="1"/>
</dbReference>
<dbReference type="HAMAP" id="MF_04080">
    <property type="entry name" value="HIV_VPR"/>
    <property type="match status" value="1"/>
</dbReference>
<dbReference type="InterPro" id="IPR000012">
    <property type="entry name" value="RetroV_VpR/X"/>
</dbReference>
<dbReference type="Pfam" id="PF00522">
    <property type="entry name" value="VPR"/>
    <property type="match status" value="1"/>
</dbReference>
<dbReference type="PRINTS" id="PR00444">
    <property type="entry name" value="HIVVPRVPX"/>
</dbReference>
<keyword id="KW-0010">Activator</keyword>
<keyword id="KW-0014">AIDS</keyword>
<keyword id="KW-0053">Apoptosis</keyword>
<keyword id="KW-0131">Cell cycle</keyword>
<keyword id="KW-1079">Host G2/M cell cycle arrest by virus</keyword>
<keyword id="KW-1048">Host nucleus</keyword>
<keyword id="KW-0945">Host-virus interaction</keyword>
<keyword id="KW-0407">Ion channel</keyword>
<keyword id="KW-0406">Ion transport</keyword>
<keyword id="KW-1121">Modulation of host cell cycle by virus</keyword>
<keyword id="KW-0597">Phosphoprotein</keyword>
<keyword id="KW-0804">Transcription</keyword>
<keyword id="KW-0805">Transcription regulation</keyword>
<keyword id="KW-0813">Transport</keyword>
<keyword id="KW-1163">Viral penetration into host nucleus</keyword>
<keyword id="KW-0946">Virion</keyword>
<keyword id="KW-1160">Virus entry into host cell</keyword>
<protein>
    <recommendedName>
        <fullName evidence="1">Protein Vpr</fullName>
    </recommendedName>
    <alternativeName>
        <fullName evidence="1">R ORF protein</fullName>
    </alternativeName>
    <alternativeName>
        <fullName evidence="1">Viral protein R</fullName>
    </alternativeName>
</protein>
<organism>
    <name type="scientific">Human immunodeficiency virus type 1 group M subtype B (isolate YU-2)</name>
    <name type="common">HIV-1</name>
    <dbReference type="NCBI Taxonomy" id="362651"/>
    <lineage>
        <taxon>Viruses</taxon>
        <taxon>Riboviria</taxon>
        <taxon>Pararnavirae</taxon>
        <taxon>Artverviricota</taxon>
        <taxon>Revtraviricetes</taxon>
        <taxon>Ortervirales</taxon>
        <taxon>Retroviridae</taxon>
        <taxon>Orthoretrovirinae</taxon>
        <taxon>Lentivirus</taxon>
        <taxon>Human immunodeficiency virus type 1</taxon>
    </lineage>
</organism>
<comment type="function">
    <text evidence="1">During virus replication, may deplete host UNG protein, and incude G2-M cell cycle arrest. Acts by targeting specific host proteins for degradation by the 26S proteasome, through association with the cellular CUL4A-DDB1 E3 ligase complex by direct interaction with host VPRPB/DCAF-1. Cell cycle arrest reportedly occurs within hours of infection and is not blocked by antiviral agents, suggesting that it is initiated by the VPR carried into the virion. Additionally, VPR induces apoptosis in a cell cycle dependent manner suggesting that these two effects are mechanistically linked. Detected in the serum and cerebrospinal fluid of AIDS patient, VPR may also induce cell death to bystander cells.</text>
</comment>
<comment type="function">
    <text evidence="1">During virus entry, plays a role in the transport of the viral pre-integration (PIC) complex to the host nucleus. This function is crucial for viral infection of non-dividing macrophages. May act directly at the nuclear pore complex, by binding nucleoporins phenylalanine-glycine (FG)-repeat regions.</text>
</comment>
<comment type="subunit">
    <text evidence="1">Homooligomer, may form homodimer. Interacts with p6-gag region of the Pr55 Gag precursor protein through a (Leu-X-X)4 motif near the C-terminus of the P6gag protein. Interacts with host UNG. May interact with host RAD23A/HHR23A. Interacts with host VPRBP/DCAF1, leading to hijack the CUL4A-RBX1-DDB1-DCAF1/VPRBP complex, mediating ubiquitination of host proteins such as TERT and ZGPAT and arrest of the cell cycle in G2 phase.</text>
</comment>
<comment type="subcellular location">
    <subcellularLocation>
        <location evidence="1">Virion</location>
    </subcellularLocation>
    <subcellularLocation>
        <location evidence="1">Host nucleus</location>
    </subcellularLocation>
    <subcellularLocation>
        <location evidence="1">Host extracellular space</location>
    </subcellularLocation>
    <text evidence="1">Incorporation into virion is dependent on p6 GAG sequences. Lacks a canonical nuclear localization signal, thus import into nucleus may function independently of the human importin pathway. Detected in high quantity in the serum and cerebrospinal fluid of AIDS patient.</text>
</comment>
<comment type="PTM">
    <text evidence="1">Phosphorylated on several residues by host. These phosphorylations regulate VPR activity for the nuclear import of the HIV-1 pre-integration complex.</text>
</comment>
<comment type="miscellaneous">
    <text evidence="1">HIV-1 lineages are divided in three main groups, M (for Major), O (for Outlier), and N (for New, or Non-M, Non-O). The vast majority of strains found worldwide belong to the group M. Group O seems to be endemic to and largely confined to Cameroon and neighboring countries in West Central Africa, where these viruses represent a small minority of HIV-1 strains. The group N is represented by a limited number of isolates from Cameroonian persons. The group M is further subdivided in 9 clades or subtypes (A to D, F to H, J and K).</text>
</comment>
<comment type="similarity">
    <text evidence="1">Belongs to the HIV-1 VPR protein family.</text>
</comment>
<feature type="chain" id="PRO_0000085436" description="Protein Vpr">
    <location>
        <begin position="1"/>
        <end position="97"/>
    </location>
</feature>
<feature type="region of interest" description="Homooligomerization" evidence="1">
    <location>
        <begin position="1"/>
        <end position="42"/>
    </location>
</feature>
<feature type="modified residue" description="Phosphoserine; by host" evidence="1">
    <location>
        <position position="79"/>
    </location>
</feature>
<feature type="modified residue" description="Phosphoserine; by host" evidence="1">
    <location>
        <position position="95"/>
    </location>
</feature>
<feature type="modified residue" description="Phosphoserine; by host" evidence="1">
    <location>
        <position position="97"/>
    </location>
</feature>
<organismHost>
    <name type="scientific">Homo sapiens</name>
    <name type="common">Human</name>
    <dbReference type="NCBI Taxonomy" id="9606"/>
</organismHost>
<proteinExistence type="evidence at protein level"/>